<accession>D4HRK7</accession>
<keyword id="KW-0008">Acetylcholine receptor inhibiting toxin</keyword>
<keyword id="KW-0027">Amidation</keyword>
<keyword id="KW-1015">Disulfide bond</keyword>
<keyword id="KW-1213">G-protein coupled receptor impairing toxin</keyword>
<keyword id="KW-0872">Ion channel impairing toxin</keyword>
<keyword id="KW-0528">Neurotoxin</keyword>
<keyword id="KW-0629">Postsynaptic neurotoxin</keyword>
<keyword id="KW-0964">Secreted</keyword>
<keyword id="KW-0800">Toxin</keyword>
<evidence type="ECO:0000250" key="1">
    <source>
        <dbReference type="UniProtKB" id="P0CE73"/>
    </source>
</evidence>
<evidence type="ECO:0000256" key="2">
    <source>
        <dbReference type="SAM" id="MobiDB-lite"/>
    </source>
</evidence>
<evidence type="ECO:0000269" key="3">
    <source>
    </source>
</evidence>
<evidence type="ECO:0000303" key="4">
    <source>
    </source>
</evidence>
<evidence type="ECO:0000305" key="5"/>
<evidence type="ECO:0000305" key="6">
    <source>
    </source>
</evidence>
<evidence type="ECO:0000312" key="7">
    <source>
        <dbReference type="EMBL" id="ACZ37200.1"/>
    </source>
</evidence>
<protein>
    <recommendedName>
        <fullName evidence="4">Alpha-conotoxin-like Kn1.2</fullName>
    </recommendedName>
</protein>
<dbReference type="EMBL" id="FJ937349">
    <property type="protein sequence ID" value="ACZ37200.1"/>
    <property type="molecule type" value="Genomic_DNA"/>
</dbReference>
<dbReference type="GO" id="GO:0005576">
    <property type="term" value="C:extracellular region"/>
    <property type="evidence" value="ECO:0007669"/>
    <property type="project" value="UniProtKB-SubCell"/>
</dbReference>
<dbReference type="GO" id="GO:0035792">
    <property type="term" value="C:host cell postsynaptic membrane"/>
    <property type="evidence" value="ECO:0007669"/>
    <property type="project" value="UniProtKB-KW"/>
</dbReference>
<dbReference type="GO" id="GO:0030550">
    <property type="term" value="F:acetylcholine receptor inhibitor activity"/>
    <property type="evidence" value="ECO:0007669"/>
    <property type="project" value="UniProtKB-KW"/>
</dbReference>
<dbReference type="GO" id="GO:0099106">
    <property type="term" value="F:ion channel regulator activity"/>
    <property type="evidence" value="ECO:0007669"/>
    <property type="project" value="UniProtKB-KW"/>
</dbReference>
<dbReference type="GO" id="GO:0090729">
    <property type="term" value="F:toxin activity"/>
    <property type="evidence" value="ECO:0007669"/>
    <property type="project" value="UniProtKB-KW"/>
</dbReference>
<dbReference type="InterPro" id="IPR009958">
    <property type="entry name" value="Conotoxin_a-typ"/>
</dbReference>
<dbReference type="Pfam" id="PF07365">
    <property type="entry name" value="Toxin_8"/>
    <property type="match status" value="1"/>
</dbReference>
<comment type="function">
    <text evidence="1 3">Alpha-conotoxins act on postsynaptic membranes, they bind to the nicotinic acetylcholine receptors (nAChR) and thus inhibit them (By similarity). This toxin inhibits high voltage-activated (HVA) calcium channel currents in rat DRG neurons (13% inhibition at 1 uM toxin) probably by activating GABA(B) receptors (GABBR1 and/or GABBR2) (PubMed:26948522).</text>
</comment>
<comment type="subcellular location">
    <subcellularLocation>
        <location evidence="5">Secreted</location>
    </subcellularLocation>
</comment>
<comment type="tissue specificity">
    <text evidence="5">Expressed by the venom duct.</text>
</comment>
<comment type="domain">
    <text evidence="5">The cysteine framework is I (CC-C-C). Alpha4/4 pattern.</text>
</comment>
<comment type="similarity">
    <text evidence="5">Belongs to the conotoxin A superfamily.</text>
</comment>
<reference key="1">
    <citation type="journal article" date="2010" name="J. Mol. Evol.">
        <title>Evolution of conus peptide genes: duplication and positive selection in the A-Superfamily.</title>
        <authorList>
            <person name="Puillandre N."/>
            <person name="Watkins M."/>
            <person name="Olivera B.M."/>
        </authorList>
    </citation>
    <scope>NUCLEOTIDE SEQUENCE [GENOMIC DNA]</scope>
</reference>
<reference key="2">
    <citation type="journal article" date="2016" name="Angew. Chem. Int. Ed.">
        <title>Structure-activity studies of cysteine-rich alpha-conotoxins that inhibit high-voltage-activated calcium channels via GABA(B) receptor activation reveal a minimal functional motif.</title>
        <authorList>
            <person name="Carstens B.B."/>
            <person name="Berecki G."/>
            <person name="Daniel J.T."/>
            <person name="Lee H.S."/>
            <person name="Jackson K.A."/>
            <person name="Tae H.S."/>
            <person name="Sadeghi M."/>
            <person name="Castro J."/>
            <person name="O'Donnell T."/>
            <person name="Deiteren A."/>
            <person name="Brierley S.M."/>
            <person name="Craik D.J."/>
            <person name="Adams D.J."/>
            <person name="Clark R.J."/>
        </authorList>
    </citation>
    <scope>FUNCTION</scope>
    <scope>SYNTHESIS OF 40-55</scope>
    <scope>AMIDATION AT CYS-36</scope>
</reference>
<feature type="propeptide" id="PRO_0000445675" evidence="6">
    <location>
        <begin position="1" status="less than"/>
        <end position="22"/>
    </location>
</feature>
<feature type="peptide" id="PRO_0000445676" description="Alpha-conotoxin-like Kn1.2" evidence="6">
    <location>
        <begin position="23"/>
        <end position="36"/>
    </location>
</feature>
<feature type="region of interest" description="Disordered" evidence="2">
    <location>
        <begin position="1"/>
        <end position="23"/>
    </location>
</feature>
<feature type="compositionally biased region" description="Basic and acidic residues" evidence="2">
    <location>
        <begin position="1"/>
        <end position="15"/>
    </location>
</feature>
<feature type="modified residue" description="Cysteine amide" evidence="6">
    <location>
        <position position="36"/>
    </location>
</feature>
<feature type="disulfide bond" evidence="6">
    <location>
        <begin position="25"/>
        <end position="31"/>
    </location>
</feature>
<feature type="disulfide bond" evidence="6">
    <location>
        <begin position="26"/>
        <end position="36"/>
    </location>
</feature>
<feature type="non-terminal residue" evidence="7">
    <location>
        <position position="1"/>
    </location>
</feature>
<name>CA12_CONKI</name>
<organism>
    <name type="scientific">Conus kinoshitai</name>
    <name type="common">Kinoshita's cone</name>
    <dbReference type="NCBI Taxonomy" id="376876"/>
    <lineage>
        <taxon>Eukaryota</taxon>
        <taxon>Metazoa</taxon>
        <taxon>Spiralia</taxon>
        <taxon>Lophotrochozoa</taxon>
        <taxon>Mollusca</taxon>
        <taxon>Gastropoda</taxon>
        <taxon>Caenogastropoda</taxon>
        <taxon>Neogastropoda</taxon>
        <taxon>Conoidea</taxon>
        <taxon>Conidae</taxon>
        <taxon>Conus</taxon>
        <taxon>Afonsoconus</taxon>
    </lineage>
</organism>
<sequence length="37" mass="3878">ESDGAHAKARADKPARSATNRQPGCCNNPACVKHRCG</sequence>
<proteinExistence type="evidence at protein level"/>